<proteinExistence type="evidence at protein level"/>
<evidence type="ECO:0000255" key="1">
    <source>
        <dbReference type="PROSITE-ProRule" id="PRU00288"/>
    </source>
</evidence>
<evidence type="ECO:0000256" key="2">
    <source>
        <dbReference type="SAM" id="MobiDB-lite"/>
    </source>
</evidence>
<evidence type="ECO:0000269" key="3">
    <source>
    </source>
</evidence>
<evidence type="ECO:0000269" key="4">
    <source>
    </source>
</evidence>
<evidence type="ECO:0000305" key="5"/>
<evidence type="ECO:0007744" key="6">
    <source>
    </source>
</evidence>
<evidence type="ECO:0007744" key="7">
    <source>
    </source>
</evidence>
<evidence type="ECO:0007744" key="8">
    <source>
    </source>
</evidence>
<comment type="function">
    <text evidence="5">GTPase-activating protein for the ADP ribosylation factor family.</text>
</comment>
<comment type="subcellular location">
    <subcellularLocation>
        <location evidence="3">Cytoplasm</location>
    </subcellularLocation>
    <subcellularLocation>
        <location evidence="3">Golgi apparatus</location>
    </subcellularLocation>
    <text>Associates with the Golgi complex.</text>
</comment>
<comment type="miscellaneous">
    <text evidence="4">Present with 5350 molecules/cell in log phase SD medium.</text>
</comment>
<name>AGE2_YEAST</name>
<dbReference type="EMBL" id="Z46861">
    <property type="protein sequence ID" value="CAA86907.1"/>
    <property type="molecule type" value="Genomic_DNA"/>
</dbReference>
<dbReference type="EMBL" id="BK006942">
    <property type="protein sequence ID" value="DAA08504.1"/>
    <property type="molecule type" value="Genomic_DNA"/>
</dbReference>
<dbReference type="PIR" id="S49934">
    <property type="entry name" value="S49934"/>
</dbReference>
<dbReference type="RefSeq" id="NP_012220.3">
    <property type="nucleotide sequence ID" value="NM_001179394.3"/>
</dbReference>
<dbReference type="SMR" id="P40529"/>
<dbReference type="BioGRID" id="34946">
    <property type="interactions" value="191"/>
</dbReference>
<dbReference type="DIP" id="DIP-5383N"/>
<dbReference type="FunCoup" id="P40529">
    <property type="interactions" value="214"/>
</dbReference>
<dbReference type="IntAct" id="P40529">
    <property type="interactions" value="4"/>
</dbReference>
<dbReference type="MINT" id="P40529"/>
<dbReference type="STRING" id="4932.YIL044C"/>
<dbReference type="TCDB" id="3.A.30.1.1">
    <property type="family name" value="the endoplasmic reticulum surface retrieval pathway (er-surf) family"/>
</dbReference>
<dbReference type="GlyGen" id="P40529">
    <property type="glycosylation" value="4 sites, 1 O-linked glycan (4 sites)"/>
</dbReference>
<dbReference type="iPTMnet" id="P40529"/>
<dbReference type="PaxDb" id="4932-YIL044C"/>
<dbReference type="PeptideAtlas" id="P40529"/>
<dbReference type="EnsemblFungi" id="YIL044C_mRNA">
    <property type="protein sequence ID" value="YIL044C"/>
    <property type="gene ID" value="YIL044C"/>
</dbReference>
<dbReference type="GeneID" id="854767"/>
<dbReference type="KEGG" id="sce:YIL044C"/>
<dbReference type="AGR" id="SGD:S000001306"/>
<dbReference type="SGD" id="S000001306">
    <property type="gene designation" value="AGE2"/>
</dbReference>
<dbReference type="VEuPathDB" id="FungiDB:YIL044C"/>
<dbReference type="eggNOG" id="KOG0703">
    <property type="taxonomic scope" value="Eukaryota"/>
</dbReference>
<dbReference type="GeneTree" id="ENSGT00940000172860"/>
<dbReference type="HOGENOM" id="CLU_023062_3_1_1"/>
<dbReference type="InParanoid" id="P40529"/>
<dbReference type="OMA" id="YEYKKWI"/>
<dbReference type="OrthoDB" id="10266696at2759"/>
<dbReference type="BioCyc" id="YEAST:G3O-31315-MONOMER"/>
<dbReference type="BioGRID-ORCS" id="854767">
    <property type="hits" value="0 hits in 10 CRISPR screens"/>
</dbReference>
<dbReference type="PRO" id="PR:P40529"/>
<dbReference type="Proteomes" id="UP000002311">
    <property type="component" value="Chromosome IX"/>
</dbReference>
<dbReference type="RNAct" id="P40529">
    <property type="molecule type" value="protein"/>
</dbReference>
<dbReference type="GO" id="GO:0005737">
    <property type="term" value="C:cytoplasm"/>
    <property type="evidence" value="ECO:0000318"/>
    <property type="project" value="GO_Central"/>
</dbReference>
<dbReference type="GO" id="GO:0005829">
    <property type="term" value="C:cytosol"/>
    <property type="evidence" value="ECO:0007005"/>
    <property type="project" value="SGD"/>
</dbReference>
<dbReference type="GO" id="GO:0005794">
    <property type="term" value="C:Golgi apparatus"/>
    <property type="evidence" value="ECO:0007669"/>
    <property type="project" value="UniProtKB-SubCell"/>
</dbReference>
<dbReference type="GO" id="GO:0005096">
    <property type="term" value="F:GTPase activator activity"/>
    <property type="evidence" value="ECO:0000314"/>
    <property type="project" value="SGD"/>
</dbReference>
<dbReference type="GO" id="GO:0008270">
    <property type="term" value="F:zinc ion binding"/>
    <property type="evidence" value="ECO:0007669"/>
    <property type="project" value="UniProtKB-KW"/>
</dbReference>
<dbReference type="GO" id="GO:0006888">
    <property type="term" value="P:endoplasmic reticulum to Golgi vesicle-mediated transport"/>
    <property type="evidence" value="ECO:0000316"/>
    <property type="project" value="SGD"/>
</dbReference>
<dbReference type="GO" id="GO:0006891">
    <property type="term" value="P:intra-Golgi vesicle-mediated transport"/>
    <property type="evidence" value="ECO:0000316"/>
    <property type="project" value="SGD"/>
</dbReference>
<dbReference type="FunFam" id="1.10.220.150:FF:000009">
    <property type="entry name" value="stromal membrane-associated protein 1 isoform X1"/>
    <property type="match status" value="1"/>
</dbReference>
<dbReference type="Gene3D" id="1.10.220.150">
    <property type="entry name" value="Arf GTPase activating protein"/>
    <property type="match status" value="1"/>
</dbReference>
<dbReference type="InterPro" id="IPR051718">
    <property type="entry name" value="ARF_GTPase-activating"/>
</dbReference>
<dbReference type="InterPro" id="IPR037278">
    <property type="entry name" value="ARFGAP/RecO"/>
</dbReference>
<dbReference type="InterPro" id="IPR001164">
    <property type="entry name" value="ArfGAP_dom"/>
</dbReference>
<dbReference type="InterPro" id="IPR038508">
    <property type="entry name" value="ArfGAP_dom_sf"/>
</dbReference>
<dbReference type="PANTHER" id="PTHR45705">
    <property type="entry name" value="FI20236P1"/>
    <property type="match status" value="1"/>
</dbReference>
<dbReference type="PANTHER" id="PTHR45705:SF1">
    <property type="entry name" value="FI20236P1"/>
    <property type="match status" value="1"/>
</dbReference>
<dbReference type="Pfam" id="PF01412">
    <property type="entry name" value="ArfGap"/>
    <property type="match status" value="1"/>
</dbReference>
<dbReference type="PRINTS" id="PR00405">
    <property type="entry name" value="REVINTRACTNG"/>
</dbReference>
<dbReference type="SMART" id="SM00105">
    <property type="entry name" value="ArfGap"/>
    <property type="match status" value="1"/>
</dbReference>
<dbReference type="SUPFAM" id="SSF57863">
    <property type="entry name" value="ArfGap/RecO-like zinc finger"/>
    <property type="match status" value="1"/>
</dbReference>
<dbReference type="PROSITE" id="PS50115">
    <property type="entry name" value="ARFGAP"/>
    <property type="match status" value="1"/>
</dbReference>
<accession>P40529</accession>
<accession>D6VVN8</accession>
<gene>
    <name type="primary">AGE2</name>
    <name type="ordered locus">YIL044C</name>
</gene>
<organism>
    <name type="scientific">Saccharomyces cerevisiae (strain ATCC 204508 / S288c)</name>
    <name type="common">Baker's yeast</name>
    <dbReference type="NCBI Taxonomy" id="559292"/>
    <lineage>
        <taxon>Eukaryota</taxon>
        <taxon>Fungi</taxon>
        <taxon>Dikarya</taxon>
        <taxon>Ascomycota</taxon>
        <taxon>Saccharomycotina</taxon>
        <taxon>Saccharomycetes</taxon>
        <taxon>Saccharomycetales</taxon>
        <taxon>Saccharomycetaceae</taxon>
        <taxon>Saccharomyces</taxon>
    </lineage>
</organism>
<reference key="1">
    <citation type="journal article" date="1997" name="Nature">
        <title>The nucleotide sequence of Saccharomyces cerevisiae chromosome IX.</title>
        <authorList>
            <person name="Churcher C.M."/>
            <person name="Bowman S."/>
            <person name="Badcock K."/>
            <person name="Bankier A.T."/>
            <person name="Brown D."/>
            <person name="Chillingworth T."/>
            <person name="Connor R."/>
            <person name="Devlin K."/>
            <person name="Gentles S."/>
            <person name="Hamlin N."/>
            <person name="Harris D.E."/>
            <person name="Horsnell T."/>
            <person name="Hunt S."/>
            <person name="Jagels K."/>
            <person name="Jones M."/>
            <person name="Lye G."/>
            <person name="Moule S."/>
            <person name="Odell C."/>
            <person name="Pearson D."/>
            <person name="Rajandream M.A."/>
            <person name="Rice P."/>
            <person name="Rowley N."/>
            <person name="Skelton J."/>
            <person name="Smith V."/>
            <person name="Walsh S.V."/>
            <person name="Whitehead S."/>
            <person name="Barrell B.G."/>
        </authorList>
    </citation>
    <scope>NUCLEOTIDE SEQUENCE [LARGE SCALE GENOMIC DNA]</scope>
    <source>
        <strain>ATCC 204508 / S288c</strain>
    </source>
</reference>
<reference key="2">
    <citation type="journal article" date="2014" name="G3 (Bethesda)">
        <title>The reference genome sequence of Saccharomyces cerevisiae: Then and now.</title>
        <authorList>
            <person name="Engel S.R."/>
            <person name="Dietrich F.S."/>
            <person name="Fisk D.G."/>
            <person name="Binkley G."/>
            <person name="Balakrishnan R."/>
            <person name="Costanzo M.C."/>
            <person name="Dwight S.S."/>
            <person name="Hitz B.C."/>
            <person name="Karra K."/>
            <person name="Nash R.S."/>
            <person name="Weng S."/>
            <person name="Wong E.D."/>
            <person name="Lloyd P."/>
            <person name="Skrzypek M.S."/>
            <person name="Miyasato S.R."/>
            <person name="Simison M."/>
            <person name="Cherry J.M."/>
        </authorList>
    </citation>
    <scope>GENOME REANNOTATION</scope>
    <source>
        <strain>ATCC 204508 / S288c</strain>
    </source>
</reference>
<reference key="3">
    <citation type="journal article" date="2003" name="Nature">
        <title>Global analysis of protein localization in budding yeast.</title>
        <authorList>
            <person name="Huh W.-K."/>
            <person name="Falvo J.V."/>
            <person name="Gerke L.C."/>
            <person name="Carroll A.S."/>
            <person name="Howson R.W."/>
            <person name="Weissman J.S."/>
            <person name="O'Shea E.K."/>
        </authorList>
    </citation>
    <scope>SUBCELLULAR LOCATION [LARGE SCALE ANALYSIS]</scope>
</reference>
<reference key="4">
    <citation type="journal article" date="2003" name="Nature">
        <title>Global analysis of protein expression in yeast.</title>
        <authorList>
            <person name="Ghaemmaghami S."/>
            <person name="Huh W.-K."/>
            <person name="Bower K."/>
            <person name="Howson R.W."/>
            <person name="Belle A."/>
            <person name="Dephoure N."/>
            <person name="O'Shea E.K."/>
            <person name="Weissman J.S."/>
        </authorList>
    </citation>
    <scope>LEVEL OF PROTEIN EXPRESSION [LARGE SCALE ANALYSIS]</scope>
</reference>
<reference key="5">
    <citation type="journal article" date="2005" name="Mol. Cell. Proteomics">
        <title>Quantitative phosphoproteomics applied to the yeast pheromone signaling pathway.</title>
        <authorList>
            <person name="Gruhler A."/>
            <person name="Olsen J.V."/>
            <person name="Mohammed S."/>
            <person name="Mortensen P."/>
            <person name="Faergeman N.J."/>
            <person name="Mann M."/>
            <person name="Jensen O.N."/>
        </authorList>
    </citation>
    <scope>IDENTIFICATION BY MASS SPECTROMETRY [LARGE SCALE ANALYSIS]</scope>
    <source>
        <strain>YAL6B</strain>
    </source>
</reference>
<reference key="6">
    <citation type="journal article" date="2008" name="Mol. Cell. Proteomics">
        <title>A multidimensional chromatography technology for in-depth phosphoproteome analysis.</title>
        <authorList>
            <person name="Albuquerque C.P."/>
            <person name="Smolka M.B."/>
            <person name="Payne S.H."/>
            <person name="Bafna V."/>
            <person name="Eng J."/>
            <person name="Zhou H."/>
        </authorList>
    </citation>
    <scope>PHOSPHORYLATION [LARGE SCALE ANALYSIS] AT SER-180</scope>
    <scope>IDENTIFICATION BY MASS SPECTROMETRY [LARGE SCALE ANALYSIS]</scope>
</reference>
<reference key="7">
    <citation type="journal article" date="2009" name="Science">
        <title>Global analysis of Cdk1 substrate phosphorylation sites provides insights into evolution.</title>
        <authorList>
            <person name="Holt L.J."/>
            <person name="Tuch B.B."/>
            <person name="Villen J."/>
            <person name="Johnson A.D."/>
            <person name="Gygi S.P."/>
            <person name="Morgan D.O."/>
        </authorList>
    </citation>
    <scope>PHOSPHORYLATION [LARGE SCALE ANALYSIS] AT SER-180; SER-183 AND SER-207</scope>
    <scope>IDENTIFICATION BY MASS SPECTROMETRY [LARGE SCALE ANALYSIS]</scope>
</reference>
<reference key="8">
    <citation type="journal article" date="2012" name="Proc. Natl. Acad. Sci. U.S.A.">
        <title>N-terminal acetylome analyses and functional insights of the N-terminal acetyltransferase NatB.</title>
        <authorList>
            <person name="Van Damme P."/>
            <person name="Lasa M."/>
            <person name="Polevoda B."/>
            <person name="Gazquez C."/>
            <person name="Elosegui-Artola A."/>
            <person name="Kim D.S."/>
            <person name="De Juan-Pardo E."/>
            <person name="Demeyer K."/>
            <person name="Hole K."/>
            <person name="Larrea E."/>
            <person name="Timmerman E."/>
            <person name="Prieto J."/>
            <person name="Arnesen T."/>
            <person name="Sherman F."/>
            <person name="Gevaert K."/>
            <person name="Aldabe R."/>
        </authorList>
    </citation>
    <scope>ACETYLATION [LARGE SCALE ANALYSIS] AT SER-2</scope>
    <scope>CLEAVAGE OF INITIATOR METHIONINE [LARGE SCALE ANALYSIS]</scope>
    <scope>IDENTIFICATION BY MASS SPECTROMETRY [LARGE SCALE ANALYSIS]</scope>
</reference>
<sequence length="298" mass="32638">MSTSVPVKKALSALLRDPGNSHCADCKAQLHPRWASWSLGVFICIKCAGIHRSLGTHISKVKSVDLDTWKEEHLVKLIQFKNNLRANSYYEATLADELKQRKITDTSSLQNFIKNKYEYKKWIGDLSSIEGLNDSTEPVLHKPSANHSLPASNARLDQSSNSLQKTQTQPPSHLLSTSRSNTSLLNLQVSSLSKTTSNTSVTSSATSIGAANTKTGNRVGEFGQRNDLKKSILSLYSKPSAQTQSQNSFFTSTTPQPCNTPSPFVNTGITATNNNSMNSNSSSNISLDDNELFKNVWS</sequence>
<keyword id="KW-0007">Acetylation</keyword>
<keyword id="KW-0963">Cytoplasm</keyword>
<keyword id="KW-0333">Golgi apparatus</keyword>
<keyword id="KW-0343">GTPase activation</keyword>
<keyword id="KW-0479">Metal-binding</keyword>
<keyword id="KW-0597">Phosphoprotein</keyword>
<keyword id="KW-1185">Reference proteome</keyword>
<keyword id="KW-0862">Zinc</keyword>
<keyword id="KW-0863">Zinc-finger</keyword>
<feature type="initiator methionine" description="Removed" evidence="8">
    <location>
        <position position="1"/>
    </location>
</feature>
<feature type="chain" id="PRO_0000074228" description="ADP-ribosylation factor GTPase-activating protein effector protein 2">
    <location>
        <begin position="2"/>
        <end position="298"/>
    </location>
</feature>
<feature type="domain" description="Arf-GAP" evidence="1">
    <location>
        <begin position="8"/>
        <end position="130"/>
    </location>
</feature>
<feature type="zinc finger region" description="C4-type" evidence="1">
    <location>
        <begin position="23"/>
        <end position="47"/>
    </location>
</feature>
<feature type="region of interest" description="Disordered" evidence="2">
    <location>
        <begin position="137"/>
        <end position="180"/>
    </location>
</feature>
<feature type="compositionally biased region" description="Polar residues" evidence="2">
    <location>
        <begin position="145"/>
        <end position="171"/>
    </location>
</feature>
<feature type="modified residue" description="N-acetylserine" evidence="8">
    <location>
        <position position="2"/>
    </location>
</feature>
<feature type="modified residue" description="Phosphoserine" evidence="6 7">
    <location>
        <position position="180"/>
    </location>
</feature>
<feature type="modified residue" description="Phosphoserine" evidence="7">
    <location>
        <position position="183"/>
    </location>
</feature>
<feature type="modified residue" description="Phosphoserine" evidence="7">
    <location>
        <position position="207"/>
    </location>
</feature>
<protein>
    <recommendedName>
        <fullName>ADP-ribosylation factor GTPase-activating protein effector protein 2</fullName>
        <shortName>ARF GAP effector protein 2</shortName>
    </recommendedName>
</protein>